<accession>Q72NW0</accession>
<dbReference type="EC" id="3.1.3.77" evidence="1"/>
<dbReference type="EMBL" id="AE016823">
    <property type="protein sequence ID" value="AAS71276.1"/>
    <property type="molecule type" value="Genomic_DNA"/>
</dbReference>
<dbReference type="RefSeq" id="WP_001022662.1">
    <property type="nucleotide sequence ID" value="NC_005823.1"/>
</dbReference>
<dbReference type="SMR" id="Q72NW0"/>
<dbReference type="GeneID" id="61142598"/>
<dbReference type="KEGG" id="lic:LIC_12718"/>
<dbReference type="HOGENOM" id="CLU_023273_0_0_12"/>
<dbReference type="UniPathway" id="UPA00904">
    <property type="reaction ID" value="UER00876"/>
</dbReference>
<dbReference type="UniPathway" id="UPA00904">
    <property type="reaction ID" value="UER00877"/>
</dbReference>
<dbReference type="Proteomes" id="UP000007037">
    <property type="component" value="Chromosome I"/>
</dbReference>
<dbReference type="GO" id="GO:0043715">
    <property type="term" value="F:2,3-diketo-5-methylthiopentyl-1-phosphate enolase activity"/>
    <property type="evidence" value="ECO:0007669"/>
    <property type="project" value="UniProtKB-UniRule"/>
</dbReference>
<dbReference type="GO" id="GO:0043716">
    <property type="term" value="F:2-hydroxy-3-keto-5-methylthiopentenyl-1-phosphate phosphatase activity"/>
    <property type="evidence" value="ECO:0007669"/>
    <property type="project" value="UniProtKB-UniRule"/>
</dbReference>
<dbReference type="GO" id="GO:0043874">
    <property type="term" value="F:acireductone synthase activity"/>
    <property type="evidence" value="ECO:0007669"/>
    <property type="project" value="UniProtKB-EC"/>
</dbReference>
<dbReference type="GO" id="GO:0000287">
    <property type="term" value="F:magnesium ion binding"/>
    <property type="evidence" value="ECO:0007669"/>
    <property type="project" value="UniProtKB-UniRule"/>
</dbReference>
<dbReference type="GO" id="GO:0019509">
    <property type="term" value="P:L-methionine salvage from methylthioadenosine"/>
    <property type="evidence" value="ECO:0007669"/>
    <property type="project" value="UniProtKB-UniRule"/>
</dbReference>
<dbReference type="CDD" id="cd01629">
    <property type="entry name" value="HAD_EP"/>
    <property type="match status" value="1"/>
</dbReference>
<dbReference type="FunFam" id="3.40.50.1000:FF:000079">
    <property type="entry name" value="Enolase-phosphatase E1"/>
    <property type="match status" value="1"/>
</dbReference>
<dbReference type="Gene3D" id="1.10.720.60">
    <property type="match status" value="1"/>
</dbReference>
<dbReference type="Gene3D" id="3.40.50.1000">
    <property type="entry name" value="HAD superfamily/HAD-like"/>
    <property type="match status" value="1"/>
</dbReference>
<dbReference type="HAMAP" id="MF_01681">
    <property type="entry name" value="Salvage_MtnC"/>
    <property type="match status" value="1"/>
</dbReference>
<dbReference type="InterPro" id="IPR023943">
    <property type="entry name" value="Enolase-ppase_E1"/>
</dbReference>
<dbReference type="InterPro" id="IPR036412">
    <property type="entry name" value="HAD-like_sf"/>
</dbReference>
<dbReference type="InterPro" id="IPR023214">
    <property type="entry name" value="HAD_sf"/>
</dbReference>
<dbReference type="NCBIfam" id="TIGR01691">
    <property type="entry name" value="enolase-ppase"/>
    <property type="match status" value="1"/>
</dbReference>
<dbReference type="PANTHER" id="PTHR20371">
    <property type="entry name" value="ENOLASE-PHOSPHATASE E1"/>
    <property type="match status" value="1"/>
</dbReference>
<dbReference type="PANTHER" id="PTHR20371:SF1">
    <property type="entry name" value="ENOLASE-PHOSPHATASE E1"/>
    <property type="match status" value="1"/>
</dbReference>
<dbReference type="Pfam" id="PF00702">
    <property type="entry name" value="Hydrolase"/>
    <property type="match status" value="1"/>
</dbReference>
<dbReference type="SFLD" id="SFLDF00044">
    <property type="entry name" value="enolase-phosphatase"/>
    <property type="match status" value="1"/>
</dbReference>
<dbReference type="SFLD" id="SFLDS00003">
    <property type="entry name" value="Haloacid_Dehalogenase"/>
    <property type="match status" value="1"/>
</dbReference>
<dbReference type="SUPFAM" id="SSF56784">
    <property type="entry name" value="HAD-like"/>
    <property type="match status" value="1"/>
</dbReference>
<reference key="1">
    <citation type="journal article" date="2004" name="J. Bacteriol.">
        <title>Comparative genomics of two Leptospira interrogans serovars reveals novel insights into physiology and pathogenesis.</title>
        <authorList>
            <person name="Nascimento A.L.T.O."/>
            <person name="Ko A.I."/>
            <person name="Martins E.A.L."/>
            <person name="Monteiro-Vitorello C.B."/>
            <person name="Ho P.L."/>
            <person name="Haake D.A."/>
            <person name="Verjovski-Almeida S."/>
            <person name="Hartskeerl R.A."/>
            <person name="Marques M.V."/>
            <person name="Oliveira M.C."/>
            <person name="Menck C.F.M."/>
            <person name="Leite L.C.C."/>
            <person name="Carrer H."/>
            <person name="Coutinho L.L."/>
            <person name="Degrave W.M."/>
            <person name="Dellagostin O.A."/>
            <person name="El-Dorry H."/>
            <person name="Ferro E.S."/>
            <person name="Ferro M.I.T."/>
            <person name="Furlan L.R."/>
            <person name="Gamberini M."/>
            <person name="Giglioti E.A."/>
            <person name="Goes-Neto A."/>
            <person name="Goldman G.H."/>
            <person name="Goldman M.H.S."/>
            <person name="Harakava R."/>
            <person name="Jeronimo S.M.B."/>
            <person name="Junqueira-de-Azevedo I.L.M."/>
            <person name="Kimura E.T."/>
            <person name="Kuramae E.E."/>
            <person name="Lemos E.G.M."/>
            <person name="Lemos M.V.F."/>
            <person name="Marino C.L."/>
            <person name="Nunes L.R."/>
            <person name="de Oliveira R.C."/>
            <person name="Pereira G.G."/>
            <person name="Reis M.S."/>
            <person name="Schriefer A."/>
            <person name="Siqueira W.J."/>
            <person name="Sommer P."/>
            <person name="Tsai S.M."/>
            <person name="Simpson A.J.G."/>
            <person name="Ferro J.A."/>
            <person name="Camargo L.E.A."/>
            <person name="Kitajima J.P."/>
            <person name="Setubal J.C."/>
            <person name="Van Sluys M.A."/>
        </authorList>
    </citation>
    <scope>NUCLEOTIDE SEQUENCE [LARGE SCALE GENOMIC DNA]</scope>
    <source>
        <strain>Fiocruz L1-130</strain>
    </source>
</reference>
<sequence length="234" mass="26678">MNIKTFEFYLFDIEGTTTPIEFVHKILFPYSVEKFDSFFQSNLLEKEWIEKLILEGKNDTTYSGKLSDSAFDLSEYCKHLVSLDRKSGILKEIQGRIWKSGYENGELKSSMFSDVPSFLKKIQASKKKSAVYSSGSIQAQKLIFEYSDFGNLTHFFYAYFDTGVGGKRESSSYSKISEQLGVAPEKILFFTDIKEEADAAKEAKLHSAILERPGNYPQPQHSHFKISSFEGLNP</sequence>
<gene>
    <name evidence="1" type="primary">mtnC</name>
    <name type="ordered locus">LIC_12718</name>
</gene>
<protein>
    <recommendedName>
        <fullName evidence="1">Enolase-phosphatase E1</fullName>
        <ecNumber evidence="1">3.1.3.77</ecNumber>
    </recommendedName>
    <alternativeName>
        <fullName evidence="1">2,3-diketo-5-methylthio-1-phosphopentane phosphatase</fullName>
    </alternativeName>
</protein>
<proteinExistence type="inferred from homology"/>
<keyword id="KW-0028">Amino-acid biosynthesis</keyword>
<keyword id="KW-0378">Hydrolase</keyword>
<keyword id="KW-0460">Magnesium</keyword>
<keyword id="KW-0479">Metal-binding</keyword>
<keyword id="KW-0486">Methionine biosynthesis</keyword>
<organism>
    <name type="scientific">Leptospira interrogans serogroup Icterohaemorrhagiae serovar copenhageni (strain Fiocruz L1-130)</name>
    <dbReference type="NCBI Taxonomy" id="267671"/>
    <lineage>
        <taxon>Bacteria</taxon>
        <taxon>Pseudomonadati</taxon>
        <taxon>Spirochaetota</taxon>
        <taxon>Spirochaetia</taxon>
        <taxon>Leptospirales</taxon>
        <taxon>Leptospiraceae</taxon>
        <taxon>Leptospira</taxon>
    </lineage>
</organism>
<feature type="chain" id="PRO_0000357380" description="Enolase-phosphatase E1">
    <location>
        <begin position="1"/>
        <end position="234"/>
    </location>
</feature>
<feature type="region of interest" description="Disordered" evidence="2">
    <location>
        <begin position="212"/>
        <end position="234"/>
    </location>
</feature>
<comment type="function">
    <text evidence="1">Bifunctional enzyme that catalyzes the enolization of 2,3-diketo-5-methylthiopentyl-1-phosphate (DK-MTP-1-P) into the intermediate 2-hydroxy-3-keto-5-methylthiopentenyl-1-phosphate (HK-MTPenyl-1-P), which is then dephosphorylated to form the acireductone 1,2-dihydroxy-3-keto-5-methylthiopentene (DHK-MTPene).</text>
</comment>
<comment type="catalytic activity">
    <reaction evidence="1">
        <text>5-methylsulfanyl-2,3-dioxopentyl phosphate + H2O = 1,2-dihydroxy-5-(methylsulfanyl)pent-1-en-3-one + phosphate</text>
        <dbReference type="Rhea" id="RHEA:21700"/>
        <dbReference type="ChEBI" id="CHEBI:15377"/>
        <dbReference type="ChEBI" id="CHEBI:43474"/>
        <dbReference type="ChEBI" id="CHEBI:49252"/>
        <dbReference type="ChEBI" id="CHEBI:58828"/>
        <dbReference type="EC" id="3.1.3.77"/>
    </reaction>
</comment>
<comment type="cofactor">
    <cofactor evidence="1">
        <name>Mg(2+)</name>
        <dbReference type="ChEBI" id="CHEBI:18420"/>
    </cofactor>
    <text evidence="1">Binds 1 Mg(2+) ion per subunit.</text>
</comment>
<comment type="pathway">
    <text evidence="1">Amino-acid biosynthesis; L-methionine biosynthesis via salvage pathway; L-methionine from S-methyl-5-thio-alpha-D-ribose 1-phosphate: step 3/6.</text>
</comment>
<comment type="pathway">
    <text evidence="1">Amino-acid biosynthesis; L-methionine biosynthesis via salvage pathway; L-methionine from S-methyl-5-thio-alpha-D-ribose 1-phosphate: step 4/6.</text>
</comment>
<comment type="subunit">
    <text evidence="1">Monomer.</text>
</comment>
<comment type="similarity">
    <text evidence="1">Belongs to the HAD-like hydrolase superfamily. MasA/MtnC family.</text>
</comment>
<name>MTNC_LEPIC</name>
<evidence type="ECO:0000255" key="1">
    <source>
        <dbReference type="HAMAP-Rule" id="MF_01681"/>
    </source>
</evidence>
<evidence type="ECO:0000256" key="2">
    <source>
        <dbReference type="SAM" id="MobiDB-lite"/>
    </source>
</evidence>